<sequence length="593" mass="68201">MEEHTQGSHVEAGIVEHPNAEDFGHARTLPTDTNWFKHAVFYEVLVRAFYDSNADGIGDLRGLTEKLDYIKWLGVDCLWLPPFYDSPLRDGGYDIRDFYKVLPEFGTVDDFVTLLDAAHRRGIRIITDLVMNHTSDQHEWFQESRHNPDGPYGDFYVWSDTSDRYPDARIIFVDTEESNWTFDPVRRQFYWHRFFSHQPDLNYDNPAVQEAMLDVLRFWLDLGIDGFRLDAVPYLFEREGTNCENLPETHAFLKRCRKAIDDEYPGRVLLAEANQWPADVVAYFGDPDTGGDECHMAFHFPLMPRIFMAVRRESRFPISEILAQTPPIPDTAQWGIFLRNHDELTLEMVTDEERDYMYAEYAKDPRMKANVGIRRRLAPLLENDRNQIELFTALLLSLPGSPVLYYGDEIGMGDIIWLGDRDSVRTPMQWTPDRNAGFSKATPGRLYLPPNQDAVYGYHSVNVEAQLDSSSSLLNWTRNMLAVRSRHDAFAVGTFRELGGSNPSVLAYIREVTRQQGDGGAKTDAVLCVNNLSRFPQPIELNLQQWAGYIPVEMTGYVEFPSIGQLPYLLTLPGHGFYWFQLREPDPEPGAQQ</sequence>
<dbReference type="EC" id="3.2.1.1" evidence="3"/>
<dbReference type="EC" id="5.4.99.16" evidence="2 3 5"/>
<dbReference type="EMBL" id="CP000480">
    <property type="protein sequence ID" value="ABK71531.1"/>
    <property type="molecule type" value="Genomic_DNA"/>
</dbReference>
<dbReference type="EMBL" id="CP001663">
    <property type="protein sequence ID" value="AFP42769.1"/>
    <property type="molecule type" value="Genomic_DNA"/>
</dbReference>
<dbReference type="RefSeq" id="WP_003897929.1">
    <property type="nucleotide sequence ID" value="NZ_SIJM01000033.1"/>
</dbReference>
<dbReference type="RefSeq" id="YP_890728.1">
    <property type="nucleotide sequence ID" value="NC_008596.1"/>
</dbReference>
<dbReference type="PDB" id="3ZO9">
    <property type="method" value="X-ray"/>
    <property type="resolution" value="1.84 A"/>
    <property type="chains" value="A/B=1-593"/>
</dbReference>
<dbReference type="PDB" id="3ZOA">
    <property type="method" value="X-ray"/>
    <property type="resolution" value="1.85 A"/>
    <property type="chains" value="A/B=1-593"/>
</dbReference>
<dbReference type="PDB" id="5JY7">
    <property type="method" value="X-ray"/>
    <property type="resolution" value="3.60 A"/>
    <property type="chains" value="A/B/C/D/E/F/G/H=1-593"/>
</dbReference>
<dbReference type="PDBsum" id="3ZO9"/>
<dbReference type="PDBsum" id="3ZOA"/>
<dbReference type="PDBsum" id="5JY7"/>
<dbReference type="SMR" id="A0R6E0"/>
<dbReference type="STRING" id="246196.MSMEG_6515"/>
<dbReference type="CAZy" id="GH13">
    <property type="family name" value="Glycoside Hydrolase Family 13"/>
</dbReference>
<dbReference type="PaxDb" id="246196-MSMEI_6343"/>
<dbReference type="GeneID" id="93461108"/>
<dbReference type="KEGG" id="msb:LJ00_32205"/>
<dbReference type="KEGG" id="msg:MSMEI_6343"/>
<dbReference type="KEGG" id="msm:MSMEG_6515"/>
<dbReference type="PATRIC" id="fig|246196.19.peg.6339"/>
<dbReference type="eggNOG" id="COG0366">
    <property type="taxonomic scope" value="Bacteria"/>
</dbReference>
<dbReference type="OrthoDB" id="9043248at2"/>
<dbReference type="BioCyc" id="MetaCyc:MONOMER-6023"/>
<dbReference type="BRENDA" id="5.4.99.16">
    <property type="organism ID" value="3512"/>
</dbReference>
<dbReference type="UniPathway" id="UPA00164"/>
<dbReference type="EvolutionaryTrace" id="A0R6E0"/>
<dbReference type="Proteomes" id="UP000000757">
    <property type="component" value="Chromosome"/>
</dbReference>
<dbReference type="Proteomes" id="UP000006158">
    <property type="component" value="Chromosome"/>
</dbReference>
<dbReference type="GO" id="GO:0004556">
    <property type="term" value="F:alpha-amylase activity"/>
    <property type="evidence" value="ECO:0000314"/>
    <property type="project" value="UniProtKB"/>
</dbReference>
<dbReference type="GO" id="GO:0005509">
    <property type="term" value="F:calcium ion binding"/>
    <property type="evidence" value="ECO:0000314"/>
    <property type="project" value="UniProtKB"/>
</dbReference>
<dbReference type="GO" id="GO:0047471">
    <property type="term" value="F:maltose alpha-D-glucosyltransferase activity"/>
    <property type="evidence" value="ECO:0000314"/>
    <property type="project" value="UniProtKB"/>
</dbReference>
<dbReference type="GO" id="GO:0005978">
    <property type="term" value="P:glycogen biosynthetic process"/>
    <property type="evidence" value="ECO:0007669"/>
    <property type="project" value="UniProtKB-UniPathway"/>
</dbReference>
<dbReference type="GO" id="GO:0005977">
    <property type="term" value="P:glycogen metabolic process"/>
    <property type="evidence" value="ECO:0000314"/>
    <property type="project" value="UniProtKB"/>
</dbReference>
<dbReference type="GO" id="GO:0000023">
    <property type="term" value="P:maltose metabolic process"/>
    <property type="evidence" value="ECO:0000314"/>
    <property type="project" value="UniProtKB"/>
</dbReference>
<dbReference type="GO" id="GO:0000272">
    <property type="term" value="P:polysaccharide catabolic process"/>
    <property type="evidence" value="ECO:0007669"/>
    <property type="project" value="UniProtKB-KW"/>
</dbReference>
<dbReference type="GO" id="GO:0005991">
    <property type="term" value="P:trehalose metabolic process"/>
    <property type="evidence" value="ECO:0000314"/>
    <property type="project" value="UniProtKB"/>
</dbReference>
<dbReference type="CDD" id="cd11334">
    <property type="entry name" value="AmyAc_TreS"/>
    <property type="match status" value="1"/>
</dbReference>
<dbReference type="FunFam" id="3.20.20.80:FF:000055">
    <property type="entry name" value="Trehalose synthase"/>
    <property type="match status" value="1"/>
</dbReference>
<dbReference type="FunFam" id="2.60.40.1180:FF:000054">
    <property type="entry name" value="Trehalose synthase/amylase TreS"/>
    <property type="match status" value="1"/>
</dbReference>
<dbReference type="Gene3D" id="3.20.20.80">
    <property type="entry name" value="Glycosidases"/>
    <property type="match status" value="1"/>
</dbReference>
<dbReference type="Gene3D" id="2.60.40.1180">
    <property type="entry name" value="Golgi alpha-mannosidase II"/>
    <property type="match status" value="1"/>
</dbReference>
<dbReference type="Gene3D" id="3.90.400.10">
    <property type="entry name" value="Oligo-1,6-glucosidase, Domain 2"/>
    <property type="match status" value="1"/>
</dbReference>
<dbReference type="InterPro" id="IPR006047">
    <property type="entry name" value="Glyco_hydro_13_cat_dom"/>
</dbReference>
<dbReference type="InterPro" id="IPR013780">
    <property type="entry name" value="Glyco_hydro_b"/>
</dbReference>
<dbReference type="InterPro" id="IPR017853">
    <property type="entry name" value="Glycoside_hydrolase_SF"/>
</dbReference>
<dbReference type="InterPro" id="IPR032091">
    <property type="entry name" value="Malt_amylase-like_C"/>
</dbReference>
<dbReference type="InterPro" id="IPR045857">
    <property type="entry name" value="O16G_dom_2"/>
</dbReference>
<dbReference type="InterPro" id="IPR012810">
    <property type="entry name" value="TreS/a-amylase_N"/>
</dbReference>
<dbReference type="NCBIfam" id="TIGR02456">
    <property type="entry name" value="treS_nterm"/>
    <property type="match status" value="1"/>
</dbReference>
<dbReference type="PANTHER" id="PTHR10357">
    <property type="entry name" value="ALPHA-AMYLASE FAMILY MEMBER"/>
    <property type="match status" value="1"/>
</dbReference>
<dbReference type="PANTHER" id="PTHR10357:SF219">
    <property type="entry name" value="MALTOSE ALPHA-D-GLUCOSYLTRANSFERASE"/>
    <property type="match status" value="1"/>
</dbReference>
<dbReference type="Pfam" id="PF00128">
    <property type="entry name" value="Alpha-amylase"/>
    <property type="match status" value="1"/>
</dbReference>
<dbReference type="Pfam" id="PF16657">
    <property type="entry name" value="Malt_amylase_C"/>
    <property type="match status" value="1"/>
</dbReference>
<dbReference type="SMART" id="SM00642">
    <property type="entry name" value="Aamy"/>
    <property type="match status" value="1"/>
</dbReference>
<dbReference type="SUPFAM" id="SSF51445">
    <property type="entry name" value="(Trans)glycosidases"/>
    <property type="match status" value="1"/>
</dbReference>
<dbReference type="SUPFAM" id="SSF51011">
    <property type="entry name" value="Glycosyl hydrolase domain"/>
    <property type="match status" value="1"/>
</dbReference>
<name>TRES_MYCS2</name>
<gene>
    <name evidence="9" type="primary">treS</name>
    <name type="ordered locus">MSMEG_6515</name>
    <name type="ordered locus">MSMEI_6343</name>
</gene>
<proteinExistence type="evidence at protein level"/>
<feature type="chain" id="PRO_0000412905" description="Trehalose synthase/amylase TreS">
    <location>
        <begin position="1"/>
        <end position="593"/>
    </location>
</feature>
<feature type="active site" description="Nucleophile" evidence="5">
    <location>
        <position position="230"/>
    </location>
</feature>
<feature type="active site" description="Proton donor" evidence="1">
    <location>
        <position position="272"/>
    </location>
</feature>
<feature type="binding site" evidence="1">
    <location>
        <position position="90"/>
    </location>
    <ligand>
        <name>substrate</name>
    </ligand>
</feature>
<feature type="binding site" evidence="6 11 12">
    <location>
        <position position="132"/>
    </location>
    <ligand>
        <name>Ca(2+)</name>
        <dbReference type="ChEBI" id="CHEBI:29108"/>
    </ligand>
</feature>
<feature type="binding site" evidence="1">
    <location>
        <position position="133"/>
    </location>
    <ligand>
        <name>substrate</name>
    </ligand>
</feature>
<feature type="binding site" evidence="1">
    <location>
        <position position="198"/>
    </location>
    <ligand>
        <name>substrate</name>
    </ligand>
</feature>
<feature type="binding site" evidence="6 11 12">
    <location>
        <position position="200"/>
    </location>
    <ligand>
        <name>Ca(2+)</name>
        <dbReference type="ChEBI" id="CHEBI:29108"/>
    </ligand>
</feature>
<feature type="binding site" evidence="1">
    <location>
        <position position="228"/>
    </location>
    <ligand>
        <name>substrate</name>
    </ligand>
</feature>
<feature type="binding site" evidence="6 11 12">
    <location>
        <position position="234"/>
    </location>
    <ligand>
        <name>Ca(2+)</name>
        <dbReference type="ChEBI" id="CHEBI:29108"/>
    </ligand>
</feature>
<feature type="binding site" evidence="6 11 12">
    <location>
        <position position="235"/>
    </location>
    <ligand>
        <name>Ca(2+)</name>
        <dbReference type="ChEBI" id="CHEBI:29108"/>
    </ligand>
</feature>
<feature type="binding site" evidence="6 11 12">
    <location>
        <position position="237"/>
    </location>
    <ligand>
        <name>Ca(2+)</name>
        <dbReference type="ChEBI" id="CHEBI:29108"/>
    </ligand>
</feature>
<feature type="binding site" evidence="1">
    <location>
        <position position="341"/>
    </location>
    <ligand>
        <name>substrate</name>
    </ligand>
</feature>
<feature type="binding site" evidence="1">
    <location>
        <position position="342"/>
    </location>
    <ligand>
        <name>substrate</name>
    </ligand>
</feature>
<feature type="helix" evidence="13">
    <location>
        <begin position="20"/>
        <end position="22"/>
    </location>
</feature>
<feature type="helix" evidence="13">
    <location>
        <begin position="35"/>
        <end position="38"/>
    </location>
</feature>
<feature type="strand" evidence="13">
    <location>
        <begin position="41"/>
        <end position="43"/>
    </location>
</feature>
<feature type="helix" evidence="13">
    <location>
        <begin position="46"/>
        <end position="49"/>
    </location>
</feature>
<feature type="strand" evidence="13">
    <location>
        <begin position="52"/>
        <end position="57"/>
    </location>
</feature>
<feature type="helix" evidence="13">
    <location>
        <begin position="60"/>
        <end position="65"/>
    </location>
</feature>
<feature type="helix" evidence="13">
    <location>
        <begin position="67"/>
        <end position="73"/>
    </location>
</feature>
<feature type="strand" evidence="13">
    <location>
        <begin position="77"/>
        <end position="80"/>
    </location>
</feature>
<feature type="turn" evidence="13">
    <location>
        <begin position="89"/>
        <end position="92"/>
    </location>
</feature>
<feature type="strand" evidence="13">
    <location>
        <begin position="96"/>
        <end position="101"/>
    </location>
</feature>
<feature type="helix" evidence="13">
    <location>
        <begin position="103"/>
        <end position="105"/>
    </location>
</feature>
<feature type="helix" evidence="13">
    <location>
        <begin position="108"/>
        <end position="120"/>
    </location>
</feature>
<feature type="strand" evidence="13">
    <location>
        <begin position="124"/>
        <end position="130"/>
    </location>
</feature>
<feature type="helix" evidence="13">
    <location>
        <begin position="139"/>
        <end position="146"/>
    </location>
</feature>
<feature type="turn" evidence="13">
    <location>
        <begin position="151"/>
        <end position="154"/>
    </location>
</feature>
<feature type="strand" evidence="13">
    <location>
        <begin position="158"/>
        <end position="162"/>
    </location>
</feature>
<feature type="turn" evidence="13">
    <location>
        <begin position="171"/>
        <end position="175"/>
    </location>
</feature>
<feature type="strand" evidence="13">
    <location>
        <begin position="179"/>
        <end position="182"/>
    </location>
</feature>
<feature type="turn" evidence="13">
    <location>
        <begin position="184"/>
        <end position="186"/>
    </location>
</feature>
<feature type="strand" evidence="13">
    <location>
        <begin position="188"/>
        <end position="191"/>
    </location>
</feature>
<feature type="helix" evidence="13">
    <location>
        <begin position="206"/>
        <end position="222"/>
    </location>
</feature>
<feature type="strand" evidence="13">
    <location>
        <begin position="226"/>
        <end position="231"/>
    </location>
</feature>
<feature type="helix" evidence="13">
    <location>
        <begin position="232"/>
        <end position="234"/>
    </location>
</feature>
<feature type="strand" evidence="13">
    <location>
        <begin position="243"/>
        <end position="245"/>
    </location>
</feature>
<feature type="helix" evidence="13">
    <location>
        <begin position="247"/>
        <end position="263"/>
    </location>
</feature>
<feature type="strand" evidence="13">
    <location>
        <begin position="268"/>
        <end position="272"/>
    </location>
</feature>
<feature type="helix" evidence="13">
    <location>
        <begin position="277"/>
        <end position="280"/>
    </location>
</feature>
<feature type="helix" evidence="13">
    <location>
        <begin position="281"/>
        <end position="284"/>
    </location>
</feature>
<feature type="helix" evidence="13">
    <location>
        <begin position="287"/>
        <end position="289"/>
    </location>
</feature>
<feature type="strand" evidence="13">
    <location>
        <begin position="295"/>
        <end position="298"/>
    </location>
</feature>
<feature type="helix" evidence="13">
    <location>
        <begin position="302"/>
        <end position="312"/>
    </location>
</feature>
<feature type="helix" evidence="13">
    <location>
        <begin position="316"/>
        <end position="323"/>
    </location>
</feature>
<feature type="strand" evidence="13">
    <location>
        <begin position="333"/>
        <end position="336"/>
    </location>
</feature>
<feature type="turn" evidence="13">
    <location>
        <begin position="343"/>
        <end position="345"/>
    </location>
</feature>
<feature type="turn" evidence="13">
    <location>
        <begin position="352"/>
        <end position="354"/>
    </location>
</feature>
<feature type="turn" evidence="13">
    <location>
        <begin position="356"/>
        <end position="360"/>
    </location>
</feature>
<feature type="helix" evidence="13">
    <location>
        <begin position="361"/>
        <end position="363"/>
    </location>
</feature>
<feature type="helix" evidence="13">
    <location>
        <begin position="365"/>
        <end position="369"/>
    </location>
</feature>
<feature type="turn" evidence="13">
    <location>
        <begin position="370"/>
        <end position="372"/>
    </location>
</feature>
<feature type="helix" evidence="13">
    <location>
        <begin position="377"/>
        <end position="380"/>
    </location>
</feature>
<feature type="turn" evidence="13">
    <location>
        <begin position="381"/>
        <end position="383"/>
    </location>
</feature>
<feature type="helix" evidence="13">
    <location>
        <begin position="385"/>
        <end position="397"/>
    </location>
</feature>
<feature type="strand" evidence="13">
    <location>
        <begin position="398"/>
        <end position="405"/>
    </location>
</feature>
<feature type="turn" evidence="13">
    <location>
        <begin position="406"/>
        <end position="411"/>
    </location>
</feature>
<feature type="helix" evidence="13">
    <location>
        <begin position="416"/>
        <end position="418"/>
    </location>
</feature>
<feature type="helix" evidence="13">
    <location>
        <begin position="422"/>
        <end position="424"/>
    </location>
</feature>
<feature type="helix" evidence="13">
    <location>
        <begin position="434"/>
        <end position="437"/>
    </location>
</feature>
<feature type="helix" evidence="13">
    <location>
        <begin position="443"/>
        <end position="445"/>
    </location>
</feature>
<feature type="strand" evidence="13">
    <location>
        <begin position="446"/>
        <end position="448"/>
    </location>
</feature>
<feature type="turn" evidence="13">
    <location>
        <begin position="454"/>
        <end position="456"/>
    </location>
</feature>
<feature type="turn" evidence="13">
    <location>
        <begin position="458"/>
        <end position="460"/>
    </location>
</feature>
<feature type="helix" evidence="13">
    <location>
        <begin position="463"/>
        <end position="467"/>
    </location>
</feature>
<feature type="helix" evidence="13">
    <location>
        <begin position="473"/>
        <end position="485"/>
    </location>
</feature>
<feature type="helix" evidence="13">
    <location>
        <begin position="488"/>
        <end position="492"/>
    </location>
</feature>
<feature type="strand" evidence="13">
    <location>
        <begin position="494"/>
        <end position="497"/>
    </location>
</feature>
<feature type="strand" evidence="13">
    <location>
        <begin position="505"/>
        <end position="512"/>
    </location>
</feature>
<feature type="strand" evidence="13">
    <location>
        <begin position="524"/>
        <end position="531"/>
    </location>
</feature>
<feature type="strand" evidence="13">
    <location>
        <begin position="533"/>
        <end position="535"/>
    </location>
</feature>
<feature type="strand" evidence="13">
    <location>
        <begin position="537"/>
        <end position="541"/>
    </location>
</feature>
<feature type="helix" evidence="13">
    <location>
        <begin position="544"/>
        <end position="546"/>
    </location>
</feature>
<feature type="strand" evidence="13">
    <location>
        <begin position="550"/>
        <end position="553"/>
    </location>
</feature>
<feature type="turn" evidence="13">
    <location>
        <begin position="554"/>
        <end position="556"/>
    </location>
</feature>
<feature type="strand" evidence="13">
    <location>
        <begin position="568"/>
        <end position="572"/>
    </location>
</feature>
<feature type="strand" evidence="13">
    <location>
        <begin position="577"/>
        <end position="583"/>
    </location>
</feature>
<evidence type="ECO:0000250" key="1">
    <source>
        <dbReference type="UniProtKB" id="Q9ZEU2"/>
    </source>
</evidence>
<evidence type="ECO:0000269" key="2">
    <source>
    </source>
</evidence>
<evidence type="ECO:0000269" key="3">
    <source>
    </source>
</evidence>
<evidence type="ECO:0000269" key="4">
    <source>
    </source>
</evidence>
<evidence type="ECO:0000269" key="5">
    <source>
    </source>
</evidence>
<evidence type="ECO:0000269" key="6">
    <source>
    </source>
</evidence>
<evidence type="ECO:0000269" key="7">
    <source>
    </source>
</evidence>
<evidence type="ECO:0000269" key="8">
    <source>
    </source>
</evidence>
<evidence type="ECO:0000303" key="9">
    <source>
    </source>
</evidence>
<evidence type="ECO:0000305" key="10"/>
<evidence type="ECO:0007744" key="11">
    <source>
        <dbReference type="PDB" id="3ZO9"/>
    </source>
</evidence>
<evidence type="ECO:0007744" key="12">
    <source>
        <dbReference type="PDB" id="3ZOA"/>
    </source>
</evidence>
<evidence type="ECO:0007829" key="13">
    <source>
        <dbReference type="PDB" id="3ZO9"/>
    </source>
</evidence>
<reference key="1">
    <citation type="submission" date="2006-10" db="EMBL/GenBank/DDBJ databases">
        <authorList>
            <person name="Fleischmann R.D."/>
            <person name="Dodson R.J."/>
            <person name="Haft D.H."/>
            <person name="Merkel J.S."/>
            <person name="Nelson W.C."/>
            <person name="Fraser C.M."/>
        </authorList>
    </citation>
    <scope>NUCLEOTIDE SEQUENCE [LARGE SCALE GENOMIC DNA]</scope>
    <source>
        <strain>ATCC 700084 / mc(2)155</strain>
    </source>
</reference>
<reference key="2">
    <citation type="journal article" date="2007" name="Genome Biol.">
        <title>Interrupted coding sequences in Mycobacterium smegmatis: authentic mutations or sequencing errors?</title>
        <authorList>
            <person name="Deshayes C."/>
            <person name="Perrodou E."/>
            <person name="Gallien S."/>
            <person name="Euphrasie D."/>
            <person name="Schaeffer C."/>
            <person name="Van-Dorsselaer A."/>
            <person name="Poch O."/>
            <person name="Lecompte O."/>
            <person name="Reyrat J.-M."/>
        </authorList>
    </citation>
    <scope>NUCLEOTIDE SEQUENCE [LARGE SCALE GENOMIC DNA]</scope>
    <source>
        <strain>ATCC 700084 / mc(2)155</strain>
    </source>
</reference>
<reference key="3">
    <citation type="journal article" date="2009" name="Genome Res.">
        <title>Ortho-proteogenomics: multiple proteomes investigation through orthology and a new MS-based protocol.</title>
        <authorList>
            <person name="Gallien S."/>
            <person name="Perrodou E."/>
            <person name="Carapito C."/>
            <person name="Deshayes C."/>
            <person name="Reyrat J.-M."/>
            <person name="Van Dorsselaer A."/>
            <person name="Poch O."/>
            <person name="Schaeffer C."/>
            <person name="Lecompte O."/>
        </authorList>
    </citation>
    <scope>NUCLEOTIDE SEQUENCE [LARGE SCALE GENOMIC DNA]</scope>
    <source>
        <strain>ATCC 700084 / mc(2)155</strain>
    </source>
</reference>
<reference key="4">
    <citation type="journal article" date="1987" name="J. Antibiot.">
        <title>Validoxylamines as trehalase inhibitors.</title>
        <authorList>
            <person name="Kameda Y."/>
            <person name="Asano N."/>
            <person name="Yamaguchi T."/>
            <person name="Matsui K."/>
        </authorList>
    </citation>
    <scope>ACTIVITY REGULATION</scope>
</reference>
<reference key="5">
    <citation type="journal article" date="2004" name="Eur. J. Biochem.">
        <title>Trehalose synthase of Mycobacterium smegmatis: purification, cloning, expression, and properties of the enzyme.</title>
        <authorList>
            <person name="Pan Y.T."/>
            <person name="Koroth Edavana V."/>
            <person name="Jourdian W.J."/>
            <person name="Edmondson R."/>
            <person name="Carroll J.D."/>
            <person name="Pastuszak I."/>
            <person name="Elbein A.D."/>
        </authorList>
    </citation>
    <scope>FUNCTION AS A TREHALOSE SYNTHASE</scope>
    <scope>CATALYTIC ACTIVITY</scope>
    <scope>SUBUNIT</scope>
    <scope>SUBSTRATE SPECIFICITY</scope>
    <scope>BIOPHYSICOCHEMICAL PROPERTIES</scope>
    <scope>ACTIVITY REGULATION</scope>
    <scope>IDENTIFICATION BY MASS SPECTROMETRY</scope>
    <source>
        <strain>ATCC 14468 / DSM 43277 / NCIB 9953 / NCTC 10265 / W-113</strain>
        <strain>ATCC 700084 / mc(2)155</strain>
    </source>
</reference>
<reference key="6">
    <citation type="journal article" date="2008" name="FEBS J.">
        <title>Trehalose synthase converts glycogen to trehalose.</title>
        <authorList>
            <person name="Pan Y.T."/>
            <person name="Carroll J.D."/>
            <person name="Asano N."/>
            <person name="Pastuszak I."/>
            <person name="Edavana V.K."/>
            <person name="Elbein A.D."/>
        </authorList>
    </citation>
    <scope>FUNCTION AS A TREHALOSE SYNTHASE AND AMYLASE</scope>
    <scope>BIOPHYSICOCHEMICAL PROPERTIES</scope>
    <scope>SUBSTRATE SPECIFICITY</scope>
    <scope>ACTIVITY REGULATION</scope>
    <scope>CATALYTIC ACTIVITY</scope>
</reference>
<reference key="7">
    <citation type="journal article" date="2010" name="J. Biol. Chem.">
        <title>Last step in the conversion of trehalose to glycogen: a mycobacterial enzyme that transfers maltose from maltose 1-phosphate to glycogen.</title>
        <authorList>
            <person name="Elbein A.D."/>
            <person name="Pastuszak I."/>
            <person name="Tackett A.J."/>
            <person name="Wilson T."/>
            <person name="Pan Y.T."/>
        </authorList>
    </citation>
    <scope>FUNCTION</scope>
    <scope>ROLE IN CONVERSION OF TREHALOSE TO GLYCOGEN</scope>
    <scope>DISRUPTION PHENOTYPE</scope>
    <scope>PATHWAY</scope>
    <source>
        <strain>ATCC 14468 / DSM 43277 / NCIB 9953 / NCTC 10265 / W-113</strain>
    </source>
</reference>
<reference key="8">
    <citation type="journal article" date="2011" name="J. Biol. Chem.">
        <title>Mechanistic analysis of trehalose synthase from mycobacterium smegmatis.</title>
        <authorList>
            <person name="Zhang R."/>
            <person name="Pan Y.T."/>
            <person name="He S."/>
            <person name="Lam M."/>
            <person name="Brayer G.D."/>
            <person name="Elbein A.D."/>
            <person name="Withers S.G."/>
        </authorList>
    </citation>
    <scope>FUNCTION</scope>
    <scope>KINETIC PARAMETERS</scope>
    <scope>CATALYTIC MECHANISM</scope>
    <scope>ACTIVE SITE</scope>
    <scope>CATALYTIC ACTIVITY</scope>
</reference>
<reference evidence="11 12" key="9">
    <citation type="journal article" date="2013" name="Glycobiology">
        <title>The structure of the Mycobacterium smegmatis trehalose synthase reveals an unusual active site configuration and acarbose-binding mode.</title>
        <authorList>
            <person name="Caner S."/>
            <person name="Nguyen N."/>
            <person name="Aguda A."/>
            <person name="Zhang R."/>
            <person name="Pan Y.T."/>
            <person name="Withers S.G."/>
            <person name="Brayer G.D."/>
        </authorList>
    </citation>
    <scope>X-RAY CRYSTALLOGRAPHY (1.84 ANGSTROMS) IN COMPLEX WITH CALCIUM</scope>
</reference>
<reference key="10">
    <citation type="journal article" date="2016" name="PLoS Pathog.">
        <title>Metabolic network for the biosynthesis of intra- and extracellular alpha-glucans required for virulence of Mycobacterium tuberculosis.</title>
        <authorList>
            <person name="Koliwer-Brandl H."/>
            <person name="Syson K."/>
            <person name="van de Weerd R."/>
            <person name="Chandra G."/>
            <person name="Appelmelk B."/>
            <person name="Alber M."/>
            <person name="Ioerger T.R."/>
            <person name="Jacobs W.R. Jr."/>
            <person name="Geurtsen J."/>
            <person name="Bornemann S."/>
            <person name="Kalscheuer R."/>
        </authorList>
    </citation>
    <scope>FUNCTION</scope>
    <scope>DISRUPTION PHENOTYPE</scope>
    <scope>PATHWAY</scope>
</reference>
<protein>
    <recommendedName>
        <fullName evidence="9">Trehalose synthase/amylase TreS</fullName>
        <ecNumber evidence="3">3.2.1.1</ecNumber>
        <ecNumber evidence="2 3 5">5.4.99.16</ecNumber>
    </recommendedName>
    <alternativeName>
        <fullName evidence="9">Maltose alpha-D-glucosyltransferase</fullName>
        <shortName evidence="9">MTase</shortName>
    </alternativeName>
</protein>
<organism>
    <name type="scientific">Mycolicibacterium smegmatis (strain ATCC 700084 / mc(2)155)</name>
    <name type="common">Mycobacterium smegmatis</name>
    <dbReference type="NCBI Taxonomy" id="246196"/>
    <lineage>
        <taxon>Bacteria</taxon>
        <taxon>Bacillati</taxon>
        <taxon>Actinomycetota</taxon>
        <taxon>Actinomycetes</taxon>
        <taxon>Mycobacteriales</taxon>
        <taxon>Mycobacteriaceae</taxon>
        <taxon>Mycolicibacterium</taxon>
    </lineage>
</organism>
<keyword id="KW-0002">3D-structure</keyword>
<keyword id="KW-0106">Calcium</keyword>
<keyword id="KW-0119">Carbohydrate metabolism</keyword>
<keyword id="KW-0320">Glycogen biosynthesis</keyword>
<keyword id="KW-0321">Glycogen metabolism</keyword>
<keyword id="KW-0326">Glycosidase</keyword>
<keyword id="KW-0378">Hydrolase</keyword>
<keyword id="KW-0413">Isomerase</keyword>
<keyword id="KW-0479">Metal-binding</keyword>
<keyword id="KW-0624">Polysaccharide degradation</keyword>
<keyword id="KW-1185">Reference proteome</keyword>
<comment type="function">
    <text evidence="2 3 4 5 7">Catalyzes the reversible interconversion of maltose and trehalose by transglucosylation (PubMed:15511231, PubMed:18505459, PubMed:20118231, PubMed:21840994). Maltose is the preferred substrate (PubMed:15511231, PubMed:18505459). To a lesser extent, also displays amylase activity, catalyzing the endohydrolysis of (1-&gt;4)-alpha-D-glucosidic linkages in glycogen and maltooligosaccharides such as maltoheptaose, to produce maltose which then can be converted to trehalose (PubMed:18505459). TreS plays a key role in the utilization of trehalose for the production of glycogen and alpha-glucan via the TreS-Pep2 branch involved in the biosynthesis of maltose-1-phosphate (M1P) (PubMed:20118231, PubMed:27513637). Might also function as a sensor and/or regulator of trehalose levels within the cell. Thus, when trehalose levels in the cell become dangerously low, TreS can expedite the conversion of glycogen to maltose via its amylase activity and then convert the maltose to trehalose; but this enzyme also can expedite or promote the conversion of trehalose to glycogen when cytoplasmic trehalose levels become too high. Is also able to catalyze the hydrolytic cleavage of alpha-aryl glucosides, as well as alpha-glucosyl fluoride in vitro.</text>
</comment>
<comment type="catalytic activity">
    <reaction evidence="2 3 5">
        <text>D-maltose = alpha,alpha-trehalose</text>
        <dbReference type="Rhea" id="RHEA:15145"/>
        <dbReference type="ChEBI" id="CHEBI:16551"/>
        <dbReference type="ChEBI" id="CHEBI:17306"/>
        <dbReference type="EC" id="5.4.99.16"/>
    </reaction>
</comment>
<comment type="catalytic activity">
    <reaction evidence="3">
        <text>Endohydrolysis of (1-&gt;4)-alpha-D-glucosidic linkages in polysaccharides containing three or more (1-&gt;4)-alpha-linked D-glucose units.</text>
        <dbReference type="EC" id="3.2.1.1"/>
    </reaction>
</comment>
<comment type="activity regulation">
    <text evidence="2 3 8">The amylase activity is stimulated by addition of Ca(2+), but this cation and other divalent cations inhibit the trehalose synthase activity. In addition, trehalose synthase activity, but not amylase activity, is strongly inhibited, and in a competitive manner, by validoxylamine. On the other hand, amylase, but not trehalose synthase activity, is inhibited by the known transition-state amylase inhibitor, acarbose, suggesting the possibility of two different active sites. Other metal ions such as Mg(2+), Mn(2+), and Co(2+) are also somewhat effective in the stimulation of amylase activity, but Hg(2+), Cu(2+), Ni(2+) and Zn(2+) are inhibitory.</text>
</comment>
<comment type="biophysicochemical properties">
    <kinetics>
        <KM evidence="2 3 5">8 mM for maltose (at pH 6.8 and 37 degrees Celsius)</KM>
        <KM evidence="2 3 5">87 mM for trehalose (at pH 6.8 and at 37 degrees Celsius)</KM>
        <KM evidence="2 3 5">2.9 mM for 2,4-dinitrophenyl alpha-D-glucoside (at pH 6.8 and 37 degrees Celsius)</KM>
        <KM evidence="2 3 5">2.5 mM for 3,4-dinitrophenyl alpha-D-glucoside (at pH 6.8 and 37 degrees Celsius)</KM>
        <KM evidence="2 3 5">2.2 mM for 4-chloro-2-nitrophenyl alpha-D-glucoside (at pH 6.8 and 37 degrees Celsius)</KM>
        <KM evidence="2 3 5">5.8 mM for 4-nitrophenyl alpha-D-glucoside (at pH 6.8 and 37 degrees Celsius)</KM>
        <KM evidence="2 3 5">0.7 mM for 2-nitrophenyl alpha-D-glucoside (at pH 6.8 and 37 degrees Celsius)</KM>
        <KM evidence="2 3 5">0.15 mM for alpha-glucosyl fluoride (at pH 6.8 and 37 degrees Celsius)</KM>
    </kinetics>
    <phDependence>
        <text evidence="2 3">Optimum pH is between 6.0-6.2 for the amylase activity and 7.0 for the trehalose synthase activity.</text>
    </phDependence>
</comment>
<comment type="pathway">
    <text evidence="4 7">Glycan biosynthesis; glycogen biosynthesis.</text>
</comment>
<comment type="subunit">
    <text evidence="2">Homohexamer.</text>
</comment>
<comment type="disruption phenotype">
    <text evidence="4 7">Cells lacking this gene do not accumulate increased amounts of glycogen in the presence of trehalose and show only a small effect in alpha-glucan (PubMed:20118231, PubMed:27513637). Combined inactivation of treS with glgB or glgC completely blocks alpha-glucan production (PubMed:27513637).</text>
</comment>
<comment type="miscellaneous">
    <text evidence="7">Maltose-1-phosphate (M1P), the building block required for alpha-glucan production, is generated by two alternative routes: the TreS-Pep2 branch and the GlgC-GlgM branch, however it seems that the GlgC-GlgM branch provides most of M1P for the GlgE pathway in M.smegmatis.</text>
</comment>
<comment type="similarity">
    <text evidence="10">Belongs to the glycosyl hydrolase 13 family. TreS subfamily.</text>
</comment>
<accession>A0R6E0</accession>
<accession>I7GGI2</accession>